<organism>
    <name type="scientific">Nicotiana tabacum</name>
    <name type="common">Common tobacco</name>
    <dbReference type="NCBI Taxonomy" id="4097"/>
    <lineage>
        <taxon>Eukaryota</taxon>
        <taxon>Viridiplantae</taxon>
        <taxon>Streptophyta</taxon>
        <taxon>Embryophyta</taxon>
        <taxon>Tracheophyta</taxon>
        <taxon>Spermatophyta</taxon>
        <taxon>Magnoliopsida</taxon>
        <taxon>eudicotyledons</taxon>
        <taxon>Gunneridae</taxon>
        <taxon>Pentapetalae</taxon>
        <taxon>asterids</taxon>
        <taxon>lamiids</taxon>
        <taxon>Solanales</taxon>
        <taxon>Solanaceae</taxon>
        <taxon>Nicotianoideae</taxon>
        <taxon>Nicotianeae</taxon>
        <taxon>Nicotiana</taxon>
    </lineage>
</organism>
<name>CAMT4_TOBAC</name>
<comment type="function">
    <text>Methylates caffeoyl-CoA to feruloyl-CoA and 5-hydroxyferuloyl-CoA to sinapoyl-CoA. Plays a role in the synthesis of feruloylated polysaccharides. Involved in the reinforcement of the plant cell wall. Also involved in the responding to wounding or pathogen challenge by the increased formation of cell wall-bound ferulic acid polymers.</text>
</comment>
<comment type="catalytic activity">
    <reaction>
        <text>(E)-caffeoyl-CoA + S-adenosyl-L-methionine = (E)-feruloyl-CoA + S-adenosyl-L-homocysteine + H(+)</text>
        <dbReference type="Rhea" id="RHEA:16925"/>
        <dbReference type="ChEBI" id="CHEBI:15378"/>
        <dbReference type="ChEBI" id="CHEBI:57856"/>
        <dbReference type="ChEBI" id="CHEBI:59789"/>
        <dbReference type="ChEBI" id="CHEBI:87136"/>
        <dbReference type="ChEBI" id="CHEBI:87305"/>
        <dbReference type="EC" id="2.1.1.104"/>
    </reaction>
</comment>
<comment type="cofactor">
    <cofactor evidence="1">
        <name>Mg(2+)</name>
        <dbReference type="ChEBI" id="CHEBI:18420"/>
    </cofactor>
    <text evidence="1">Binds 1 Mg(2+) ion per subunit.</text>
</comment>
<comment type="pathway">
    <text>Aromatic compound metabolism; phenylpropanoid biosynthesis.</text>
</comment>
<comment type="tissue specificity">
    <text evidence="4">Mostly expressed in the bottom and middle parts of the stems.</text>
</comment>
<comment type="induction">
    <text evidence="4">By wounding and viral infection.</text>
</comment>
<comment type="similarity">
    <text evidence="3">Belongs to the class I-like SAM-binding methyltransferase superfamily. Cation-dependent O-methyltransferase family. CCoAMT subfamily.</text>
</comment>
<protein>
    <recommendedName>
        <fullName>Caffeoyl-CoA O-methyltransferase 4</fullName>
        <ecNumber>2.1.1.104</ecNumber>
    </recommendedName>
    <alternativeName>
        <fullName>Trans-caffeoyl-CoA 3-O-methyltransferase 4</fullName>
        <shortName>CCoAMT-4</shortName>
        <shortName>CCoAOMT-4</shortName>
    </alternativeName>
</protein>
<sequence length="242" mass="27266">MATDGENGRHQEVGHKSLLQSDALYQYILETSVYPREPEPMKELREITAKHPWNLMTTSADEGQFLSMLIKLINAKNTMEIGVFTGYSLLATAMALPDDGKILAMDINRENYEIGLPVIEKAGLAHKIEFKEGPALPVLDQMIEDGKYHGSYDFIFVDADKDNYLNYHKRLIDLVKIGGLIGYDNTLWNGSVVAPPDAPLRKYVRYYRDFVLELNKALAADSRIEICQLPVGDGITLCRRIS</sequence>
<feature type="chain" id="PRO_0000165700" description="Caffeoyl-CoA O-methyltransferase 4">
    <location>
        <begin position="1"/>
        <end position="242"/>
    </location>
</feature>
<feature type="binding site" evidence="2">
    <location>
        <position position="16"/>
    </location>
    <ligand>
        <name>substrate</name>
    </ligand>
</feature>
<feature type="binding site" evidence="3">
    <location>
        <position position="58"/>
    </location>
    <ligand>
        <name>S-adenosyl-L-methionine</name>
        <dbReference type="ChEBI" id="CHEBI:59789"/>
    </ligand>
</feature>
<feature type="binding site" evidence="3">
    <location>
        <position position="80"/>
    </location>
    <ligand>
        <name>S-adenosyl-L-methionine</name>
        <dbReference type="ChEBI" id="CHEBI:59789"/>
    </ligand>
</feature>
<feature type="binding site" evidence="3">
    <location>
        <begin position="82"/>
        <end position="83"/>
    </location>
    <ligand>
        <name>S-adenosyl-L-methionine</name>
        <dbReference type="ChEBI" id="CHEBI:59789"/>
    </ligand>
</feature>
<feature type="binding site" evidence="3">
    <location>
        <position position="88"/>
    </location>
    <ligand>
        <name>S-adenosyl-L-methionine</name>
        <dbReference type="ChEBI" id="CHEBI:59789"/>
    </ligand>
</feature>
<feature type="binding site" evidence="3">
    <location>
        <position position="106"/>
    </location>
    <ligand>
        <name>S-adenosyl-L-methionine</name>
        <dbReference type="ChEBI" id="CHEBI:59789"/>
    </ligand>
</feature>
<feature type="binding site" evidence="3">
    <location>
        <position position="135"/>
    </location>
    <ligand>
        <name>S-adenosyl-L-methionine</name>
        <dbReference type="ChEBI" id="CHEBI:59789"/>
    </ligand>
</feature>
<feature type="binding site" evidence="3">
    <location>
        <position position="158"/>
    </location>
    <ligand>
        <name>a divalent metal cation</name>
        <dbReference type="ChEBI" id="CHEBI:60240"/>
    </ligand>
</feature>
<feature type="binding site" evidence="2">
    <location>
        <position position="158"/>
    </location>
    <ligand>
        <name>substrate</name>
    </ligand>
</feature>
<feature type="binding site" evidence="3">
    <location>
        <position position="160"/>
    </location>
    <ligand>
        <name>S-adenosyl-L-methionine</name>
        <dbReference type="ChEBI" id="CHEBI:59789"/>
    </ligand>
</feature>
<feature type="binding site" evidence="3">
    <location>
        <position position="184"/>
    </location>
    <ligand>
        <name>a divalent metal cation</name>
        <dbReference type="ChEBI" id="CHEBI:60240"/>
    </ligand>
</feature>
<feature type="binding site" evidence="3">
    <location>
        <position position="185"/>
    </location>
    <ligand>
        <name>a divalent metal cation</name>
        <dbReference type="ChEBI" id="CHEBI:60240"/>
    </ligand>
</feature>
<feature type="binding site" evidence="2">
    <location>
        <position position="189"/>
    </location>
    <ligand>
        <name>substrate</name>
    </ligand>
</feature>
<accession>O24151</accession>
<gene>
    <name type="primary">CCOAOMT4</name>
</gene>
<proteinExistence type="evidence at transcript level"/>
<reference key="1">
    <citation type="journal article" date="1998" name="Plant Mol. Biol.">
        <title>cDNA cloning, substrate specificity and expression study of tobacco caffeoyl-CoA 3-O-methyltransferase, a lignin biosynthetic enzyme.</title>
        <authorList>
            <person name="Martz F."/>
            <person name="Maury S."/>
            <person name="Pincon G."/>
            <person name="Legrand M."/>
        </authorList>
    </citation>
    <scope>NUCLEOTIDE SEQUENCE [MRNA]</scope>
    <source>
        <strain>cv. Samsun NN</strain>
        <tissue>Leaf</tissue>
    </source>
</reference>
<reference key="2">
    <citation type="journal article" date="1999" name="Plant Physiol.">
        <title>Tobacco O-methyltransferases involved in phenylpropanoid metabolism. The different caffeoyl-coenzyme A/5-hydroxyferuloyl-coenzyme A 3/5-O-methyltransferase and caffeic acid/5-hydroxyferulic acid 3/5-O-methyltransferase classes have distinct substrate specificities and expression patterns.</title>
        <authorList>
            <person name="Maury S."/>
            <person name="Geoffroy P."/>
            <person name="Legrand M."/>
        </authorList>
    </citation>
    <scope>TISSUE SPECIFICITY</scope>
    <scope>SUBSTRATE SPECIFICITY</scope>
    <scope>INDUCTION</scope>
</reference>
<keyword id="KW-0438">Lignin biosynthesis</keyword>
<keyword id="KW-0460">Magnesium</keyword>
<keyword id="KW-0479">Metal-binding</keyword>
<keyword id="KW-0489">Methyltransferase</keyword>
<keyword id="KW-1185">Reference proteome</keyword>
<keyword id="KW-0949">S-adenosyl-L-methionine</keyword>
<keyword id="KW-0808">Transferase</keyword>
<dbReference type="EC" id="2.1.1.104"/>
<dbReference type="EMBL" id="U62736">
    <property type="protein sequence ID" value="AAC49916.1"/>
    <property type="molecule type" value="mRNA"/>
</dbReference>
<dbReference type="PIR" id="T03801">
    <property type="entry name" value="T03801"/>
</dbReference>
<dbReference type="RefSeq" id="NP_001312330.1">
    <property type="nucleotide sequence ID" value="NM_001325401.1"/>
</dbReference>
<dbReference type="SMR" id="O24151"/>
<dbReference type="STRING" id="4097.O24151"/>
<dbReference type="PaxDb" id="4097-O24151"/>
<dbReference type="GeneID" id="107785451"/>
<dbReference type="KEGG" id="nta:107785451"/>
<dbReference type="OMA" id="MEIGIYH"/>
<dbReference type="OrthoDB" id="1213027at2759"/>
<dbReference type="PhylomeDB" id="O24151"/>
<dbReference type="UniPathway" id="UPA00711"/>
<dbReference type="Proteomes" id="UP000084051">
    <property type="component" value="Unplaced"/>
</dbReference>
<dbReference type="GO" id="GO:0042409">
    <property type="term" value="F:caffeoyl-CoA O-methyltransferase activity"/>
    <property type="evidence" value="ECO:0007669"/>
    <property type="project" value="UniProtKB-EC"/>
</dbReference>
<dbReference type="GO" id="GO:0046872">
    <property type="term" value="F:metal ion binding"/>
    <property type="evidence" value="ECO:0007669"/>
    <property type="project" value="UniProtKB-KW"/>
</dbReference>
<dbReference type="GO" id="GO:0008757">
    <property type="term" value="F:S-adenosylmethionine-dependent methyltransferase activity"/>
    <property type="evidence" value="ECO:0000318"/>
    <property type="project" value="GO_Central"/>
</dbReference>
<dbReference type="GO" id="GO:0009809">
    <property type="term" value="P:lignin biosynthetic process"/>
    <property type="evidence" value="ECO:0007669"/>
    <property type="project" value="UniProtKB-KW"/>
</dbReference>
<dbReference type="GO" id="GO:0032259">
    <property type="term" value="P:methylation"/>
    <property type="evidence" value="ECO:0007669"/>
    <property type="project" value="UniProtKB-KW"/>
</dbReference>
<dbReference type="CDD" id="cd02440">
    <property type="entry name" value="AdoMet_MTases"/>
    <property type="match status" value="1"/>
</dbReference>
<dbReference type="FunFam" id="3.40.50.150:FF:000147">
    <property type="entry name" value="Caffeoyl-CoA O-methyltransferase 1"/>
    <property type="match status" value="1"/>
</dbReference>
<dbReference type="Gene3D" id="3.40.50.150">
    <property type="entry name" value="Vaccinia Virus protein VP39"/>
    <property type="match status" value="1"/>
</dbReference>
<dbReference type="InterPro" id="IPR050362">
    <property type="entry name" value="Cation-dep_OMT"/>
</dbReference>
<dbReference type="InterPro" id="IPR029063">
    <property type="entry name" value="SAM-dependent_MTases_sf"/>
</dbReference>
<dbReference type="InterPro" id="IPR002935">
    <property type="entry name" value="SAM_O-MeTrfase"/>
</dbReference>
<dbReference type="PANTHER" id="PTHR10509:SF94">
    <property type="entry name" value="CAFFEOYL-COA O-METHYLTRANSFERASE 3"/>
    <property type="match status" value="1"/>
</dbReference>
<dbReference type="PANTHER" id="PTHR10509">
    <property type="entry name" value="O-METHYLTRANSFERASE-RELATED"/>
    <property type="match status" value="1"/>
</dbReference>
<dbReference type="Pfam" id="PF01596">
    <property type="entry name" value="Methyltransf_3"/>
    <property type="match status" value="1"/>
</dbReference>
<dbReference type="SUPFAM" id="SSF53335">
    <property type="entry name" value="S-adenosyl-L-methionine-dependent methyltransferases"/>
    <property type="match status" value="1"/>
</dbReference>
<dbReference type="PROSITE" id="PS51682">
    <property type="entry name" value="SAM_OMT_I"/>
    <property type="match status" value="1"/>
</dbReference>
<evidence type="ECO:0000250" key="1"/>
<evidence type="ECO:0000250" key="2">
    <source>
        <dbReference type="UniProtKB" id="Q40313"/>
    </source>
</evidence>
<evidence type="ECO:0000255" key="3">
    <source>
        <dbReference type="PROSITE-ProRule" id="PRU01019"/>
    </source>
</evidence>
<evidence type="ECO:0000269" key="4">
    <source>
    </source>
</evidence>